<keyword id="KW-0456">Lyase</keyword>
<keyword id="KW-0472">Membrane</keyword>
<keyword id="KW-0507">mRNA processing</keyword>
<keyword id="KW-0539">Nucleus</keyword>
<keyword id="KW-1185">Reference proteome</keyword>
<keyword id="KW-0812">Transmembrane</keyword>
<keyword id="KW-1133">Transmembrane helix</keyword>
<keyword id="KW-0819">tRNA processing</keyword>
<organism>
    <name type="scientific">Oryza sativa subsp. japonica</name>
    <name type="common">Rice</name>
    <dbReference type="NCBI Taxonomy" id="39947"/>
    <lineage>
        <taxon>Eukaryota</taxon>
        <taxon>Viridiplantae</taxon>
        <taxon>Streptophyta</taxon>
        <taxon>Embryophyta</taxon>
        <taxon>Tracheophyta</taxon>
        <taxon>Spermatophyta</taxon>
        <taxon>Magnoliopsida</taxon>
        <taxon>Liliopsida</taxon>
        <taxon>Poales</taxon>
        <taxon>Poaceae</taxon>
        <taxon>BOP clade</taxon>
        <taxon>Oryzoideae</taxon>
        <taxon>Oryzeae</taxon>
        <taxon>Oryzinae</taxon>
        <taxon>Oryza</taxon>
        <taxon>Oryza sativa</taxon>
    </lineage>
</organism>
<feature type="chain" id="PRO_0000109458" description="Probable tRNA-splicing endonuclease subunit Sen2">
    <location>
        <begin position="1"/>
        <end position="293"/>
    </location>
</feature>
<feature type="transmembrane region" description="Helical" evidence="2">
    <location>
        <begin position="267"/>
        <end position="287"/>
    </location>
</feature>
<feature type="active site" evidence="1">
    <location>
        <position position="157"/>
    </location>
</feature>
<feature type="active site" evidence="1">
    <location>
        <position position="165"/>
    </location>
</feature>
<feature type="active site" evidence="1">
    <location>
        <position position="204"/>
    </location>
</feature>
<gene>
    <name type="ordered locus">Os06g0530700</name>
    <name type="ordered locus">LOC_Os06g33980</name>
    <name type="ORF">P0410C01.17</name>
    <name type="ORF">P0438E12.38</name>
</gene>
<comment type="function">
    <text evidence="1">Constitutes one of the two catalytic subunit of the tRNA-splicing endonuclease complex, a complex responsible for identification and cleavage of the splice sites in pre-tRNA. It cleaves pre-tRNA at the 5'- and 3'-splice sites to release the intron. The products are an intron and two tRNA half-molecules bearing 2',3'-cyclic phosphate and 5'-OH termini. There are no conserved sequences at the splice sites, but the intron is invariably located at the same site in the gene, placing the splice sites an invariant distance from the constant structural features of the tRNA body. Probably carries the active site for 5'-splice site cleavage (By similarity).</text>
</comment>
<comment type="catalytic activity">
    <reaction>
        <text>pretRNA = a 3'-half-tRNA molecule with a 5'-OH end + a 5'-half-tRNA molecule with a 2',3'-cyclic phosphate end + an intron with a 2',3'-cyclic phosphate and a 5'-hydroxyl terminus.</text>
        <dbReference type="EC" id="4.6.1.16"/>
    </reaction>
</comment>
<comment type="subunit">
    <text evidence="1">tRNA splicing endonuclease is a heterotetramer composed of SEN2, SEN15, SEN34/LENG5 and SEN54.</text>
</comment>
<comment type="subcellular location">
    <subcellularLocation>
        <location evidence="1">Nucleus</location>
    </subcellularLocation>
    <subcellularLocation>
        <location evidence="3">Membrane</location>
        <topology evidence="3">Single-pass membrane protein</topology>
    </subcellularLocation>
</comment>
<comment type="similarity">
    <text evidence="3">Belongs to the tRNA-intron endonuclease family.</text>
</comment>
<dbReference type="EC" id="4.6.1.16"/>
<dbReference type="EMBL" id="AP004749">
    <property type="protein sequence ID" value="BAD54220.1"/>
    <property type="molecule type" value="Genomic_DNA"/>
</dbReference>
<dbReference type="EMBL" id="AP005450">
    <property type="protein sequence ID" value="BAD54480.1"/>
    <property type="molecule type" value="Genomic_DNA"/>
</dbReference>
<dbReference type="EMBL" id="AP008212">
    <property type="protein sequence ID" value="BAF19695.1"/>
    <property type="molecule type" value="Genomic_DNA"/>
</dbReference>
<dbReference type="EMBL" id="AP014962">
    <property type="protein sequence ID" value="BAS98061.1"/>
    <property type="molecule type" value="Genomic_DNA"/>
</dbReference>
<dbReference type="EMBL" id="AK059057">
    <property type="protein sequence ID" value="BAG86882.1"/>
    <property type="molecule type" value="mRNA"/>
</dbReference>
<dbReference type="EMBL" id="AK102915">
    <property type="protein sequence ID" value="BAG95781.1"/>
    <property type="molecule type" value="mRNA"/>
</dbReference>
<dbReference type="RefSeq" id="XP_015641868.1">
    <property type="nucleotide sequence ID" value="XM_015786382.1"/>
</dbReference>
<dbReference type="RefSeq" id="XP_015641870.1">
    <property type="nucleotide sequence ID" value="XM_015786384.1"/>
</dbReference>
<dbReference type="RefSeq" id="XP_015641871.1">
    <property type="nucleotide sequence ID" value="XM_015786385.1"/>
</dbReference>
<dbReference type="SMR" id="Q5Z6B1"/>
<dbReference type="FunCoup" id="Q5Z6B1">
    <property type="interactions" value="1"/>
</dbReference>
<dbReference type="STRING" id="39947.Q5Z6B1"/>
<dbReference type="PaxDb" id="39947-Q5Z6B1"/>
<dbReference type="EnsemblPlants" id="Os06t0530700-02">
    <property type="protein sequence ID" value="Os06t0530700-02"/>
    <property type="gene ID" value="Os06g0530700"/>
</dbReference>
<dbReference type="Gramene" id="Os06t0530700-02">
    <property type="protein sequence ID" value="Os06t0530700-02"/>
    <property type="gene ID" value="Os06g0530700"/>
</dbReference>
<dbReference type="KEGG" id="dosa:Os06g0530700"/>
<dbReference type="KEGG" id="osa:4341203"/>
<dbReference type="eggNOG" id="KOG4685">
    <property type="taxonomic scope" value="Eukaryota"/>
</dbReference>
<dbReference type="HOGENOM" id="CLU_053228_0_0_1"/>
<dbReference type="InParanoid" id="Q5Z6B1"/>
<dbReference type="OrthoDB" id="10249562at2759"/>
<dbReference type="Proteomes" id="UP000000763">
    <property type="component" value="Chromosome 6"/>
</dbReference>
<dbReference type="Proteomes" id="UP000059680">
    <property type="component" value="Chromosome 6"/>
</dbReference>
<dbReference type="ExpressionAtlas" id="Q5Z6B1">
    <property type="expression patterns" value="baseline and differential"/>
</dbReference>
<dbReference type="GO" id="GO:0005737">
    <property type="term" value="C:cytoplasm"/>
    <property type="evidence" value="ECO:0000318"/>
    <property type="project" value="GO_Central"/>
</dbReference>
<dbReference type="GO" id="GO:0016020">
    <property type="term" value="C:membrane"/>
    <property type="evidence" value="ECO:0007669"/>
    <property type="project" value="UniProtKB-SubCell"/>
</dbReference>
<dbReference type="GO" id="GO:0000214">
    <property type="term" value="C:tRNA-intron endonuclease complex"/>
    <property type="evidence" value="ECO:0000318"/>
    <property type="project" value="GO_Central"/>
</dbReference>
<dbReference type="GO" id="GO:0016829">
    <property type="term" value="F:lyase activity"/>
    <property type="evidence" value="ECO:0007669"/>
    <property type="project" value="UniProtKB-KW"/>
</dbReference>
<dbReference type="GO" id="GO:0003676">
    <property type="term" value="F:nucleic acid binding"/>
    <property type="evidence" value="ECO:0007669"/>
    <property type="project" value="InterPro"/>
</dbReference>
<dbReference type="GO" id="GO:0000213">
    <property type="term" value="F:tRNA-intron endonuclease activity"/>
    <property type="evidence" value="ECO:0000318"/>
    <property type="project" value="GO_Central"/>
</dbReference>
<dbReference type="GO" id="GO:0006397">
    <property type="term" value="P:mRNA processing"/>
    <property type="evidence" value="ECO:0007669"/>
    <property type="project" value="UniProtKB-KW"/>
</dbReference>
<dbReference type="GO" id="GO:0008033">
    <property type="term" value="P:tRNA processing"/>
    <property type="evidence" value="ECO:0000318"/>
    <property type="project" value="GO_Central"/>
</dbReference>
<dbReference type="GO" id="GO:0000379">
    <property type="term" value="P:tRNA-type intron splice site recognition and cleavage"/>
    <property type="evidence" value="ECO:0000318"/>
    <property type="project" value="GO_Central"/>
</dbReference>
<dbReference type="CDD" id="cd22363">
    <property type="entry name" value="tRNA-intron_lyase_C"/>
    <property type="match status" value="1"/>
</dbReference>
<dbReference type="FunFam" id="3.40.1350.10:FF:000005">
    <property type="entry name" value="tRNA-splicing endonuclease subunit Sen2-1"/>
    <property type="match status" value="1"/>
</dbReference>
<dbReference type="Gene3D" id="3.40.1350.10">
    <property type="match status" value="1"/>
</dbReference>
<dbReference type="InterPro" id="IPR011856">
    <property type="entry name" value="tRNA_endonuc-like_dom_sf"/>
</dbReference>
<dbReference type="InterPro" id="IPR036167">
    <property type="entry name" value="tRNA_intron_Endo_cat-like_sf"/>
</dbReference>
<dbReference type="InterPro" id="IPR006677">
    <property type="entry name" value="tRNA_intron_Endonuc_cat-like"/>
</dbReference>
<dbReference type="InterPro" id="IPR006678">
    <property type="entry name" value="tRNA_intron_Endonuc_N"/>
</dbReference>
<dbReference type="InterPro" id="IPR006676">
    <property type="entry name" value="tRNA_splic"/>
</dbReference>
<dbReference type="PANTHER" id="PTHR21227">
    <property type="entry name" value="TRNA-SPLICING ENDONUCLEASE SUBUNIT SEN2"/>
    <property type="match status" value="1"/>
</dbReference>
<dbReference type="PANTHER" id="PTHR21227:SF0">
    <property type="entry name" value="TRNA-SPLICING ENDONUCLEASE SUBUNIT SEN2"/>
    <property type="match status" value="1"/>
</dbReference>
<dbReference type="Pfam" id="PF01974">
    <property type="entry name" value="tRNA_int_endo"/>
    <property type="match status" value="1"/>
</dbReference>
<dbReference type="Pfam" id="PF02778">
    <property type="entry name" value="tRNA_int_endo_N"/>
    <property type="match status" value="1"/>
</dbReference>
<dbReference type="SUPFAM" id="SSF53032">
    <property type="entry name" value="tRNA-intron endonuclease catalytic domain-like"/>
    <property type="match status" value="1"/>
</dbReference>
<reference key="1">
    <citation type="journal article" date="2005" name="Nature">
        <title>The map-based sequence of the rice genome.</title>
        <authorList>
            <consortium name="International rice genome sequencing project (IRGSP)"/>
        </authorList>
    </citation>
    <scope>NUCLEOTIDE SEQUENCE [LARGE SCALE GENOMIC DNA]</scope>
    <source>
        <strain>cv. Nipponbare</strain>
    </source>
</reference>
<reference key="2">
    <citation type="journal article" date="2008" name="Nucleic Acids Res.">
        <title>The rice annotation project database (RAP-DB): 2008 update.</title>
        <authorList>
            <consortium name="The rice annotation project (RAP)"/>
        </authorList>
    </citation>
    <scope>GENOME REANNOTATION</scope>
    <source>
        <strain>cv. Nipponbare</strain>
    </source>
</reference>
<reference key="3">
    <citation type="journal article" date="2013" name="Rice">
        <title>Improvement of the Oryza sativa Nipponbare reference genome using next generation sequence and optical map data.</title>
        <authorList>
            <person name="Kawahara Y."/>
            <person name="de la Bastide M."/>
            <person name="Hamilton J.P."/>
            <person name="Kanamori H."/>
            <person name="McCombie W.R."/>
            <person name="Ouyang S."/>
            <person name="Schwartz D.C."/>
            <person name="Tanaka T."/>
            <person name="Wu J."/>
            <person name="Zhou S."/>
            <person name="Childs K.L."/>
            <person name="Davidson R.M."/>
            <person name="Lin H."/>
            <person name="Quesada-Ocampo L."/>
            <person name="Vaillancourt B."/>
            <person name="Sakai H."/>
            <person name="Lee S.S."/>
            <person name="Kim J."/>
            <person name="Numa H."/>
            <person name="Itoh T."/>
            <person name="Buell C.R."/>
            <person name="Matsumoto T."/>
        </authorList>
    </citation>
    <scope>GENOME REANNOTATION</scope>
    <source>
        <strain>cv. Nipponbare</strain>
    </source>
</reference>
<reference key="4">
    <citation type="journal article" date="2003" name="Science">
        <title>Collection, mapping, and annotation of over 28,000 cDNA clones from japonica rice.</title>
        <authorList>
            <consortium name="The rice full-length cDNA consortium"/>
        </authorList>
    </citation>
    <scope>NUCLEOTIDE SEQUENCE [LARGE SCALE MRNA]</scope>
    <source>
        <strain>cv. Nipponbare</strain>
    </source>
</reference>
<protein>
    <recommendedName>
        <fullName>Probable tRNA-splicing endonuclease subunit Sen2</fullName>
        <ecNumber>4.6.1.16</ecNumber>
    </recommendedName>
    <alternativeName>
        <fullName>tRNA-intron endonuclease Sen2</fullName>
    </alternativeName>
</protein>
<name>SEN2_ORYSJ</name>
<accession>Q5Z6B1</accession>
<accession>Q0DBS8</accession>
<sequence>MDLPGPRWKKGKDGKDFASLAAANPMSAIVSELKASFISSKPVAILSGPGGSAVLGVGPEQAVILNRAAFGHAIENATAQKHWFQLSPEEVFYLCHALNCIRVDSLDNKQMSEIELWDYFRSGSESFPEMYKAYAHLRLKNWVVRSGLQYGADFVAYRHHPALVHSEFAVVVVPEGAEFGNRCGRLEVWSDLLCALRASGSVAKTLLVLTISSSSKCELSSPDCLEQLVVHERTITRWILQQCREQRCEPSRDEVNREELIIEKESVVFNHWGVILGFTVLSGLLVYRLKFRQ</sequence>
<evidence type="ECO:0000250" key="1"/>
<evidence type="ECO:0000255" key="2"/>
<evidence type="ECO:0000305" key="3"/>
<proteinExistence type="evidence at transcript level"/>